<gene>
    <name evidence="1" type="primary">rpmH</name>
    <name type="ordered locus">Cgl3099</name>
    <name type="ordered locus">cg3432</name>
</gene>
<comment type="similarity">
    <text evidence="1">Belongs to the bacterial ribosomal protein bL34 family.</text>
</comment>
<comment type="sequence caution" evidence="2">
    <conflict type="erroneous initiation">
        <sequence resource="EMBL-CDS" id="BAC00493"/>
    </conflict>
</comment>
<protein>
    <recommendedName>
        <fullName evidence="1">Large ribosomal subunit protein bL34</fullName>
    </recommendedName>
    <alternativeName>
        <fullName evidence="2">50S ribosomal protein L34</fullName>
    </alternativeName>
</protein>
<reference key="1">
    <citation type="journal article" date="2003" name="Appl. Microbiol. Biotechnol.">
        <title>The Corynebacterium glutamicum genome: features and impacts on biotechnological processes.</title>
        <authorList>
            <person name="Ikeda M."/>
            <person name="Nakagawa S."/>
        </authorList>
    </citation>
    <scope>NUCLEOTIDE SEQUENCE [LARGE SCALE GENOMIC DNA]</scope>
    <source>
        <strain>ATCC 13032 / DSM 20300 / JCM 1318 / BCRC 11384 / CCUG 27702 / LMG 3730 / NBRC 12168 / NCIMB 10025 / NRRL B-2784 / 534</strain>
    </source>
</reference>
<reference key="2">
    <citation type="journal article" date="2003" name="J. Biotechnol.">
        <title>The complete Corynebacterium glutamicum ATCC 13032 genome sequence and its impact on the production of L-aspartate-derived amino acids and vitamins.</title>
        <authorList>
            <person name="Kalinowski J."/>
            <person name="Bathe B."/>
            <person name="Bartels D."/>
            <person name="Bischoff N."/>
            <person name="Bott M."/>
            <person name="Burkovski A."/>
            <person name="Dusch N."/>
            <person name="Eggeling L."/>
            <person name="Eikmanns B.J."/>
            <person name="Gaigalat L."/>
            <person name="Goesmann A."/>
            <person name="Hartmann M."/>
            <person name="Huthmacher K."/>
            <person name="Kraemer R."/>
            <person name="Linke B."/>
            <person name="McHardy A.C."/>
            <person name="Meyer F."/>
            <person name="Moeckel B."/>
            <person name="Pfefferle W."/>
            <person name="Puehler A."/>
            <person name="Rey D.A."/>
            <person name="Rueckert C."/>
            <person name="Rupp O."/>
            <person name="Sahm H."/>
            <person name="Wendisch V.F."/>
            <person name="Wiegraebe I."/>
            <person name="Tauch A."/>
        </authorList>
    </citation>
    <scope>NUCLEOTIDE SEQUENCE [LARGE SCALE GENOMIC DNA]</scope>
    <source>
        <strain>ATCC 13032 / DSM 20300 / JCM 1318 / BCRC 11384 / CCUG 27702 / LMG 3730 / NBRC 12168 / NCIMB 10025 / NRRL B-2784 / 534</strain>
    </source>
</reference>
<proteinExistence type="inferred from homology"/>
<feature type="chain" id="PRO_0000187373" description="Large ribosomal subunit protein bL34">
    <location>
        <begin position="1"/>
        <end position="47"/>
    </location>
</feature>
<dbReference type="EMBL" id="BA000036">
    <property type="protein sequence ID" value="BAC00493.1"/>
    <property type="status" value="ALT_INIT"/>
    <property type="molecule type" value="Genomic_DNA"/>
</dbReference>
<dbReference type="EMBL" id="BX927157">
    <property type="protein sequence ID" value="CAF19039.1"/>
    <property type="molecule type" value="Genomic_DNA"/>
</dbReference>
<dbReference type="RefSeq" id="NP_602291.1">
    <property type="nucleotide sequence ID" value="NC_003450.3"/>
</dbReference>
<dbReference type="RefSeq" id="WP_003855320.1">
    <property type="nucleotide sequence ID" value="NC_006958.1"/>
</dbReference>
<dbReference type="SMR" id="Q6M1C1"/>
<dbReference type="STRING" id="196627.cg3432"/>
<dbReference type="GeneID" id="1021043"/>
<dbReference type="KEGG" id="cgb:cg3432"/>
<dbReference type="KEGG" id="cgl:Cgl3099"/>
<dbReference type="PATRIC" id="fig|196627.13.peg.3033"/>
<dbReference type="eggNOG" id="COG0230">
    <property type="taxonomic scope" value="Bacteria"/>
</dbReference>
<dbReference type="HOGENOM" id="CLU_2143634_0_0_11"/>
<dbReference type="BioCyc" id="CORYNE:G18NG-12720-MONOMER"/>
<dbReference type="Proteomes" id="UP000000582">
    <property type="component" value="Chromosome"/>
</dbReference>
<dbReference type="Proteomes" id="UP000001009">
    <property type="component" value="Chromosome"/>
</dbReference>
<dbReference type="GO" id="GO:1990904">
    <property type="term" value="C:ribonucleoprotein complex"/>
    <property type="evidence" value="ECO:0007669"/>
    <property type="project" value="UniProtKB-KW"/>
</dbReference>
<dbReference type="GO" id="GO:0005840">
    <property type="term" value="C:ribosome"/>
    <property type="evidence" value="ECO:0007669"/>
    <property type="project" value="UniProtKB-KW"/>
</dbReference>
<dbReference type="GO" id="GO:0003735">
    <property type="term" value="F:structural constituent of ribosome"/>
    <property type="evidence" value="ECO:0007669"/>
    <property type="project" value="InterPro"/>
</dbReference>
<dbReference type="GO" id="GO:0006412">
    <property type="term" value="P:translation"/>
    <property type="evidence" value="ECO:0007669"/>
    <property type="project" value="UniProtKB-UniRule"/>
</dbReference>
<dbReference type="FunFam" id="1.10.287.3980:FF:000001">
    <property type="entry name" value="Mitochondrial ribosomal protein L34"/>
    <property type="match status" value="1"/>
</dbReference>
<dbReference type="Gene3D" id="1.10.287.3980">
    <property type="match status" value="1"/>
</dbReference>
<dbReference type="HAMAP" id="MF_00391">
    <property type="entry name" value="Ribosomal_bL34"/>
    <property type="match status" value="1"/>
</dbReference>
<dbReference type="InterPro" id="IPR000271">
    <property type="entry name" value="Ribosomal_bL34"/>
</dbReference>
<dbReference type="InterPro" id="IPR020939">
    <property type="entry name" value="Ribosomal_bL34_CS"/>
</dbReference>
<dbReference type="NCBIfam" id="TIGR01030">
    <property type="entry name" value="rpmH_bact"/>
    <property type="match status" value="1"/>
</dbReference>
<dbReference type="PANTHER" id="PTHR14503:SF4">
    <property type="entry name" value="LARGE RIBOSOMAL SUBUNIT PROTEIN BL34M"/>
    <property type="match status" value="1"/>
</dbReference>
<dbReference type="PANTHER" id="PTHR14503">
    <property type="entry name" value="MITOCHONDRIAL RIBOSOMAL PROTEIN 34 FAMILY MEMBER"/>
    <property type="match status" value="1"/>
</dbReference>
<dbReference type="Pfam" id="PF00468">
    <property type="entry name" value="Ribosomal_L34"/>
    <property type="match status" value="1"/>
</dbReference>
<dbReference type="PROSITE" id="PS00784">
    <property type="entry name" value="RIBOSOMAL_L34"/>
    <property type="match status" value="1"/>
</dbReference>
<keyword id="KW-1185">Reference proteome</keyword>
<keyword id="KW-0687">Ribonucleoprotein</keyword>
<keyword id="KW-0689">Ribosomal protein</keyword>
<sequence length="47" mass="5503">MAKGKRTFQPNNRRRARVHGFRLRMRTRAGRAIVAARRRKGRAKLTA</sequence>
<evidence type="ECO:0000255" key="1">
    <source>
        <dbReference type="HAMAP-Rule" id="MF_00391"/>
    </source>
</evidence>
<evidence type="ECO:0000305" key="2"/>
<accession>Q6M1C1</accession>
<accession>Q8NL50</accession>
<organism>
    <name type="scientific">Corynebacterium glutamicum (strain ATCC 13032 / DSM 20300 / JCM 1318 / BCRC 11384 / CCUG 27702 / LMG 3730 / NBRC 12168 / NCIMB 10025 / NRRL B-2784 / 534)</name>
    <dbReference type="NCBI Taxonomy" id="196627"/>
    <lineage>
        <taxon>Bacteria</taxon>
        <taxon>Bacillati</taxon>
        <taxon>Actinomycetota</taxon>
        <taxon>Actinomycetes</taxon>
        <taxon>Mycobacteriales</taxon>
        <taxon>Corynebacteriaceae</taxon>
        <taxon>Corynebacterium</taxon>
    </lineage>
</organism>
<name>RL34_CORGL</name>